<gene>
    <name evidence="1" type="primary">rppH</name>
    <name evidence="1" type="synonym">nudH</name>
    <name type="ordered locus">c3425</name>
</gene>
<organism>
    <name type="scientific">Escherichia coli O6:H1 (strain CFT073 / ATCC 700928 / UPEC)</name>
    <dbReference type="NCBI Taxonomy" id="199310"/>
    <lineage>
        <taxon>Bacteria</taxon>
        <taxon>Pseudomonadati</taxon>
        <taxon>Pseudomonadota</taxon>
        <taxon>Gammaproteobacteria</taxon>
        <taxon>Enterobacterales</taxon>
        <taxon>Enterobacteriaceae</taxon>
        <taxon>Escherichia</taxon>
    </lineage>
</organism>
<accession>P0A777</accession>
<accession>Q46930</accession>
<reference key="1">
    <citation type="journal article" date="2002" name="Proc. Natl. Acad. Sci. U.S.A.">
        <title>Extensive mosaic structure revealed by the complete genome sequence of uropathogenic Escherichia coli.</title>
        <authorList>
            <person name="Welch R.A."/>
            <person name="Burland V."/>
            <person name="Plunkett G. III"/>
            <person name="Redford P."/>
            <person name="Roesch P."/>
            <person name="Rasko D."/>
            <person name="Buckles E.L."/>
            <person name="Liou S.-R."/>
            <person name="Boutin A."/>
            <person name="Hackett J."/>
            <person name="Stroud D."/>
            <person name="Mayhew G.F."/>
            <person name="Rose D.J."/>
            <person name="Zhou S."/>
            <person name="Schwartz D.C."/>
            <person name="Perna N.T."/>
            <person name="Mobley H.L.T."/>
            <person name="Donnenberg M.S."/>
            <person name="Blattner F.R."/>
        </authorList>
    </citation>
    <scope>NUCLEOTIDE SEQUENCE [LARGE SCALE GENOMIC DNA]</scope>
    <source>
        <strain>CFT073 / ATCC 700928 / UPEC</strain>
    </source>
</reference>
<dbReference type="EC" id="3.6.1.-" evidence="1"/>
<dbReference type="EMBL" id="AE014075">
    <property type="protein sequence ID" value="AAN81870.1"/>
    <property type="molecule type" value="Genomic_DNA"/>
</dbReference>
<dbReference type="RefSeq" id="WP_000564489.1">
    <property type="nucleotide sequence ID" value="NZ_CP051263.1"/>
</dbReference>
<dbReference type="SMR" id="P0A777"/>
<dbReference type="STRING" id="199310.c3425"/>
<dbReference type="GeneID" id="75203778"/>
<dbReference type="KEGG" id="ecc:c3425"/>
<dbReference type="eggNOG" id="COG0494">
    <property type="taxonomic scope" value="Bacteria"/>
</dbReference>
<dbReference type="HOGENOM" id="CLU_087195_3_2_6"/>
<dbReference type="BioCyc" id="ECOL199310:C3425-MONOMER"/>
<dbReference type="Proteomes" id="UP000001410">
    <property type="component" value="Chromosome"/>
</dbReference>
<dbReference type="GO" id="GO:0005737">
    <property type="term" value="C:cytoplasm"/>
    <property type="evidence" value="ECO:0007669"/>
    <property type="project" value="TreeGrafter"/>
</dbReference>
<dbReference type="GO" id="GO:0034353">
    <property type="term" value="F:mRNA 5'-diphosphatase activity"/>
    <property type="evidence" value="ECO:0007669"/>
    <property type="project" value="TreeGrafter"/>
</dbReference>
<dbReference type="GO" id="GO:0006402">
    <property type="term" value="P:mRNA catabolic process"/>
    <property type="evidence" value="ECO:0007669"/>
    <property type="project" value="TreeGrafter"/>
</dbReference>
<dbReference type="CDD" id="cd03671">
    <property type="entry name" value="NUDIX_Ap4A_hydrolase_plant_like"/>
    <property type="match status" value="1"/>
</dbReference>
<dbReference type="FunFam" id="3.90.79.10:FF:000001">
    <property type="entry name" value="RNA pyrophosphohydrolase"/>
    <property type="match status" value="1"/>
</dbReference>
<dbReference type="Gene3D" id="3.90.79.10">
    <property type="entry name" value="Nucleoside Triphosphate Pyrophosphohydrolase"/>
    <property type="match status" value="1"/>
</dbReference>
<dbReference type="HAMAP" id="MF_00298">
    <property type="entry name" value="Nudix_RppH"/>
    <property type="match status" value="1"/>
</dbReference>
<dbReference type="InterPro" id="IPR020476">
    <property type="entry name" value="Nudix_hydrolase"/>
</dbReference>
<dbReference type="InterPro" id="IPR015797">
    <property type="entry name" value="NUDIX_hydrolase-like_dom_sf"/>
</dbReference>
<dbReference type="InterPro" id="IPR020084">
    <property type="entry name" value="NUDIX_hydrolase_CS"/>
</dbReference>
<dbReference type="InterPro" id="IPR000086">
    <property type="entry name" value="NUDIX_hydrolase_dom"/>
</dbReference>
<dbReference type="InterPro" id="IPR022927">
    <property type="entry name" value="RppH"/>
</dbReference>
<dbReference type="NCBIfam" id="NF001934">
    <property type="entry name" value="PRK00714.1-1"/>
    <property type="match status" value="1"/>
</dbReference>
<dbReference type="NCBIfam" id="NF001937">
    <property type="entry name" value="PRK00714.1-4"/>
    <property type="match status" value="1"/>
</dbReference>
<dbReference type="NCBIfam" id="NF001938">
    <property type="entry name" value="PRK00714.1-5"/>
    <property type="match status" value="1"/>
</dbReference>
<dbReference type="PANTHER" id="PTHR23114">
    <property type="entry name" value="M7GPPPN-MRNA HYDROLASE"/>
    <property type="match status" value="1"/>
</dbReference>
<dbReference type="PANTHER" id="PTHR23114:SF17">
    <property type="entry name" value="M7GPPPN-MRNA HYDROLASE"/>
    <property type="match status" value="1"/>
</dbReference>
<dbReference type="Pfam" id="PF00293">
    <property type="entry name" value="NUDIX"/>
    <property type="match status" value="1"/>
</dbReference>
<dbReference type="PRINTS" id="PR00502">
    <property type="entry name" value="NUDIXFAMILY"/>
</dbReference>
<dbReference type="SUPFAM" id="SSF55811">
    <property type="entry name" value="Nudix"/>
    <property type="match status" value="1"/>
</dbReference>
<dbReference type="PROSITE" id="PS51462">
    <property type="entry name" value="NUDIX"/>
    <property type="match status" value="1"/>
</dbReference>
<dbReference type="PROSITE" id="PS00893">
    <property type="entry name" value="NUDIX_BOX"/>
    <property type="match status" value="1"/>
</dbReference>
<feature type="chain" id="PRO_0000057006" description="RNA pyrophosphohydrolase">
    <location>
        <begin position="1"/>
        <end position="176"/>
    </location>
</feature>
<feature type="domain" description="Nudix hydrolase" evidence="1">
    <location>
        <begin position="6"/>
        <end position="149"/>
    </location>
</feature>
<feature type="short sequence motif" description="Nudix box">
    <location>
        <begin position="38"/>
        <end position="59"/>
    </location>
</feature>
<sequence length="176" mass="20795">MIDDDGYRPNVGIVICNRQGQVMWARRFGQHSWQFPQGGINPGESAEQAMYRELFEEVGLSRKDVRILASTRNWLRYKLPKRLVRWDTKPVCIGQKQKWFLLQLVSGDAEINMQTSSTPEFDGWRWVSYWYPVRQVVSFKRDVYRRVMKEFASVVMSLQENTPKPQNASAYRRKRG</sequence>
<comment type="function">
    <text evidence="1">Accelerates the degradation of transcripts by removing pyrophosphate from the 5'-end of triphosphorylated RNA, leading to a more labile monophosphorylated state that can stimulate subsequent ribonuclease cleavage.</text>
</comment>
<comment type="cofactor">
    <cofactor evidence="1">
        <name>a divalent metal cation</name>
        <dbReference type="ChEBI" id="CHEBI:60240"/>
    </cofactor>
</comment>
<comment type="similarity">
    <text evidence="1">Belongs to the Nudix hydrolase family. RppH subfamily.</text>
</comment>
<keyword id="KW-0378">Hydrolase</keyword>
<keyword id="KW-1185">Reference proteome</keyword>
<evidence type="ECO:0000255" key="1">
    <source>
        <dbReference type="HAMAP-Rule" id="MF_00298"/>
    </source>
</evidence>
<proteinExistence type="inferred from homology"/>
<name>RPPH_ECOL6</name>
<protein>
    <recommendedName>
        <fullName evidence="1">RNA pyrophosphohydrolase</fullName>
        <ecNumber evidence="1">3.6.1.-</ecNumber>
    </recommendedName>
    <alternativeName>
        <fullName evidence="1">(Di)nucleoside polyphosphate hydrolase</fullName>
    </alternativeName>
</protein>